<protein>
    <recommendedName>
        <fullName evidence="16 17">Suppressor of fused homolog</fullName>
        <shortName evidence="16">SUFUH</shortName>
    </recommendedName>
</protein>
<keyword id="KW-0002">3D-structure</keyword>
<keyword id="KW-0007">Acetylation</keyword>
<keyword id="KW-0025">Alternative splicing</keyword>
<keyword id="KW-1186">Ciliopathy</keyword>
<keyword id="KW-0963">Cytoplasm</keyword>
<keyword id="KW-0217">Developmental protein</keyword>
<keyword id="KW-0225">Disease variant</keyword>
<keyword id="KW-1017">Isopeptide bond</keyword>
<keyword id="KW-0979">Joubert syndrome</keyword>
<keyword id="KW-0539">Nucleus</keyword>
<keyword id="KW-0597">Phosphoprotein</keyword>
<keyword id="KW-1267">Proteomics identification</keyword>
<keyword id="KW-1185">Reference proteome</keyword>
<keyword id="KW-0043">Tumor suppressor</keyword>
<keyword id="KW-0832">Ubl conjugation</keyword>
<gene>
    <name evidence="18 21" type="primary">SUFU</name>
    <name evidence="19" type="ORF">UNQ650/PRO1280</name>
</gene>
<comment type="function">
    <text evidence="1 3 4 5 6 7 8 11 12 13 14 15">Negative regulator in the hedgehog/smoothened signaling pathway (PubMed:10559945, PubMed:10564661, PubMed:10806483, PubMed:12068298, PubMed:12975309, PubMed:15367681, PubMed:22365972, PubMed:24217340, PubMed:24311597, PubMed:27234298, PubMed:28965847). Down-regulates GLI1-mediated transactivation of target genes (PubMed:15367681, PubMed:24217340, PubMed:24311597). Down-regulates GLI2-mediated transactivation of target genes (PubMed:24217340, PubMed:24311597). Part of a corepressor complex that acts on DNA-bound GLI1. May also act by linking GLI1 to BTRC and thereby targeting GLI1 to degradation by the proteasome (PubMed:10559945, PubMed:10564661, PubMed:10806483, PubMed:24217340). Sequesters GLI1, GLI2 and GLI3 in the cytoplasm, this effect is overcome by binding of STK36 to both SUFU and a GLI protein (PubMed:10559945, PubMed:10564661, PubMed:10806483, PubMed:24217340). Negative regulator of beta-catenin signaling (By similarity). Regulates the formation of either the repressor form (GLI3R) or the activator form (GLI3A) of the full-length form of GLI3 (GLI3FL) (PubMed:24311597, PubMed:28965847). GLI3FL is complexed with SUFU in the cytoplasm and is maintained in a neutral state (PubMed:24311597, PubMed:28965847). Without the Hh signal, the SUFU-GLI3 complex is recruited to cilia, leading to the efficient processing of GLI3FL into GLI3R (PubMed:24311597, PubMed:28965847). When Hh signaling is initiated, SUFU dissociates from GLI3FL and the latter translocates to the nucleus, where it is phosphorylated, destabilized, and converted to a transcriptional activator (GLI3A) (PubMed:24311597, PubMed:28965847). Required for normal embryonic development (By similarity). Required for the proper formation of hair follicles and the control of epidermal differentiation (By similarity).</text>
</comment>
<comment type="subunit">
    <text evidence="1 3 4 5 8 10 11 12 13 15">May form homodimers (PubMed:10564661). Part of a DNA-bound corepressor complex containing SAP18, GLI1 and SIN3 (By similarity). Part of a complex containing CTNNB1 (By similarity). Binds BTRC, GLI2, GLI3, SAP18 and STK36 (PubMed:10564661, PubMed:10806483). Binds both free and DNA-bound GLI1 (PubMed:10559945, PubMed:15367681, PubMed:24217340, PubMed:24311597, PubMed:28965847). Interacts with KIF7 (By similarity). Interacts with GLI3FL and this interaction regulates the formation of either repressor or activator forms of GLI3 (PubMed:24311597, PubMed:28965847). Its association with GLI3FL is regulated by Hh signaling and dissociation of the SUFU-GLI3 interaction requires the presence of the ciliary motor KIF3A (PubMed:24311597, PubMed:28965847). Interacts with ULK3; inactivating the protein kinase activity of ULK3 (PubMed:20643644). Interacts with RAB23 (PubMed:22365972).</text>
</comment>
<comment type="interaction">
    <interactant intactId="EBI-740595">
        <id>Q9UMX1</id>
    </interactant>
    <interactant intactId="EBI-742038">
        <id>Q9P2A4</id>
        <label>ABI3</label>
    </interactant>
    <organismsDiffer>false</organismsDiffer>
    <experiments>3</experiments>
</comment>
<comment type="interaction">
    <interactant intactId="EBI-740595">
        <id>Q9UMX1</id>
    </interactant>
    <interactant intactId="EBI-11954292">
        <id>Q86V38</id>
        <label>ATN1</label>
    </interactant>
    <organismsDiffer>false</organismsDiffer>
    <experiments>3</experiments>
</comment>
<comment type="interaction">
    <interactant intactId="EBI-740595">
        <id>Q9UMX1</id>
    </interactant>
    <interactant intactId="EBI-10229433">
        <id>Q13515</id>
        <label>BFSP2</label>
    </interactant>
    <organismsDiffer>false</organismsDiffer>
    <experiments>6</experiments>
</comment>
<comment type="interaction">
    <interactant intactId="EBI-740595">
        <id>Q9UMX1</id>
    </interactant>
    <interactant intactId="EBI-1181987">
        <id>Q53ET0</id>
        <label>CRTC2</label>
    </interactant>
    <organismsDiffer>false</organismsDiffer>
    <experiments>5</experiments>
</comment>
<comment type="interaction">
    <interactant intactId="EBI-740595">
        <id>Q9UMX1</id>
    </interactant>
    <interactant intactId="EBI-748171">
        <id>O43186</id>
        <label>CRX</label>
    </interactant>
    <organismsDiffer>false</organismsDiffer>
    <experiments>3</experiments>
</comment>
<comment type="interaction">
    <interactant intactId="EBI-740595">
        <id>Q9UMX1</id>
    </interactant>
    <interactant intactId="EBI-11988027">
        <id>Q9NRI5-2</id>
        <label>DISC1</label>
    </interactant>
    <organismsDiffer>false</organismsDiffer>
    <experiments>3</experiments>
</comment>
<comment type="interaction">
    <interactant intactId="EBI-740595">
        <id>Q9UMX1</id>
    </interactant>
    <interactant intactId="EBI-11022345">
        <id>P51114-2</id>
        <label>FXR1</label>
    </interactant>
    <organismsDiffer>false</organismsDiffer>
    <experiments>3</experiments>
</comment>
<comment type="interaction">
    <interactant intactId="EBI-740595">
        <id>Q9UMX1</id>
    </interactant>
    <interactant intactId="EBI-308084">
        <id>P08151</id>
        <label>GLI1</label>
    </interactant>
    <organismsDiffer>false</organismsDiffer>
    <experiments>27</experiments>
</comment>
<comment type="interaction">
    <interactant intactId="EBI-740595">
        <id>Q9UMX1</id>
    </interactant>
    <interactant intactId="EBI-308055">
        <id>P10071</id>
        <label>GLI3</label>
    </interactant>
    <organismsDiffer>false</organismsDiffer>
    <experiments>5</experiments>
</comment>
<comment type="interaction">
    <interactant intactId="EBI-740595">
        <id>Q9UMX1</id>
    </interactant>
    <interactant intactId="EBI-744456">
        <id>Q8NEA6</id>
        <label>GLIS3</label>
    </interactant>
    <organismsDiffer>false</organismsDiffer>
    <experiments>3</experiments>
</comment>
<comment type="interaction">
    <interactant intactId="EBI-740595">
        <id>Q9UMX1</id>
    </interactant>
    <interactant intactId="EBI-1052734">
        <id>Q7Z353</id>
        <label>HDX</label>
    </interactant>
    <organismsDiffer>false</organismsDiffer>
    <experiments>4</experiments>
</comment>
<comment type="interaction">
    <interactant intactId="EBI-740595">
        <id>Q9UMX1</id>
    </interactant>
    <interactant intactId="EBI-2432309">
        <id>Q92876</id>
        <label>KLK6</label>
    </interactant>
    <organismsDiffer>false</organismsDiffer>
    <experiments>3</experiments>
</comment>
<comment type="interaction">
    <interactant intactId="EBI-740595">
        <id>Q9UMX1</id>
    </interactant>
    <interactant intactId="EBI-3044087">
        <id>Q7Z3Y8</id>
        <label>KRT27</label>
    </interactant>
    <organismsDiffer>false</organismsDiffer>
    <experiments>3</experiments>
</comment>
<comment type="interaction">
    <interactant intactId="EBI-740595">
        <id>Q9UMX1</id>
    </interactant>
    <interactant intactId="EBI-2949715">
        <id>O95678</id>
        <label>KRT75</label>
    </interactant>
    <organismsDiffer>false</organismsDiffer>
    <experiments>3</experiments>
</comment>
<comment type="interaction">
    <interactant intactId="EBI-740595">
        <id>Q9UMX1</id>
    </interactant>
    <interactant intactId="EBI-11985629">
        <id>Q96JM7-2</id>
        <label>L3MBTL3</label>
    </interactant>
    <organismsDiffer>false</organismsDiffer>
    <experiments>3</experiments>
</comment>
<comment type="interaction">
    <interactant intactId="EBI-740595">
        <id>Q9UMX1</id>
    </interactant>
    <interactant intactId="EBI-6658186">
        <id>Q86VQ0</id>
        <label>LCA5</label>
    </interactant>
    <organismsDiffer>false</organismsDiffer>
    <experiments>3</experiments>
</comment>
<comment type="interaction">
    <interactant intactId="EBI-740595">
        <id>Q9UMX1</id>
    </interactant>
    <interactant intactId="EBI-1216080">
        <id>Q9Y250</id>
        <label>LZTS1</label>
    </interactant>
    <organismsDiffer>false</organismsDiffer>
    <experiments>3</experiments>
</comment>
<comment type="interaction">
    <interactant intactId="EBI-740595">
        <id>Q9UMX1</id>
    </interactant>
    <interactant intactId="EBI-5668174">
        <id>Q9UJ55</id>
        <label>MAGEL2</label>
    </interactant>
    <organismsDiffer>false</organismsDiffer>
    <experiments>3</experiments>
</comment>
<comment type="interaction">
    <interactant intactId="EBI-740595">
        <id>Q9UMX1</id>
    </interactant>
    <interactant intactId="EBI-16439278">
        <id>Q6FHY5</id>
        <label>MEOX2</label>
    </interactant>
    <organismsDiffer>false</organismsDiffer>
    <experiments>3</experiments>
</comment>
<comment type="interaction">
    <interactant intactId="EBI-740595">
        <id>Q9UMX1</id>
    </interactant>
    <interactant intactId="EBI-750096">
        <id>Q9NPA3</id>
        <label>MID1IP1</label>
    </interactant>
    <organismsDiffer>false</organismsDiffer>
    <experiments>3</experiments>
</comment>
<comment type="interaction">
    <interactant intactId="EBI-740595">
        <id>Q9UMX1</id>
    </interactant>
    <interactant intactId="EBI-5278441">
        <id>Q12968</id>
        <label>NFATC3</label>
    </interactant>
    <organismsDiffer>false</organismsDiffer>
    <experiments>2</experiments>
</comment>
<comment type="interaction">
    <interactant intactId="EBI-740595">
        <id>Q9UMX1</id>
    </interactant>
    <interactant intactId="EBI-744871">
        <id>O00746</id>
        <label>NME4</label>
    </interactant>
    <organismsDiffer>false</organismsDiffer>
    <experiments>3</experiments>
</comment>
<comment type="interaction">
    <interactant intactId="EBI-740595">
        <id>Q9UMX1</id>
    </interactant>
    <interactant intactId="EBI-3917713">
        <id>O14753</id>
        <label>OVOL1</label>
    </interactant>
    <organismsDiffer>false</organismsDiffer>
    <experiments>3</experiments>
</comment>
<comment type="interaction">
    <interactant intactId="EBI-740595">
        <id>Q9UMX1</id>
    </interactant>
    <interactant intactId="EBI-752057">
        <id>Q7Z412</id>
        <label>PEX26</label>
    </interactant>
    <organismsDiffer>false</organismsDiffer>
    <experiments>2</experiments>
</comment>
<comment type="interaction">
    <interactant intactId="EBI-740595">
        <id>Q9UMX1</id>
    </interactant>
    <interactant intactId="EBI-746283">
        <id>Q96D15</id>
        <label>RCN3</label>
    </interactant>
    <organismsDiffer>false</organismsDiffer>
    <experiments>5</experiments>
</comment>
<comment type="interaction">
    <interactant intactId="EBI-740595">
        <id>Q9UMX1</id>
    </interactant>
    <interactant intactId="EBI-7225508">
        <id>Q96GZ6</id>
        <label>SLC41A3</label>
    </interactant>
    <organismsDiffer>false</organismsDiffer>
    <experiments>3</experiments>
</comment>
<comment type="interaction">
    <interactant intactId="EBI-740595">
        <id>Q9UMX1</id>
    </interactant>
    <interactant intactId="EBI-863797">
        <id>Q9NRP7</id>
        <label>STK36</label>
    </interactant>
    <organismsDiffer>false</organismsDiffer>
    <experiments>3</experiments>
</comment>
<comment type="interaction">
    <interactant intactId="EBI-740595">
        <id>Q9UMX1</id>
    </interactant>
    <interactant intactId="EBI-8484990">
        <id>Q8N4C7</id>
        <label>STX19</label>
    </interactant>
    <organismsDiffer>false</organismsDiffer>
    <experiments>3</experiments>
</comment>
<comment type="interaction">
    <interactant intactId="EBI-740595">
        <id>Q9UMX1</id>
    </interactant>
    <interactant intactId="EBI-11741437">
        <id>Q08117-2</id>
        <label>TLE5</label>
    </interactant>
    <organismsDiffer>false</organismsDiffer>
    <experiments>3</experiments>
</comment>
<comment type="interaction">
    <interactant intactId="EBI-740595">
        <id>Q9UMX1</id>
    </interactant>
    <interactant intactId="EBI-11963196">
        <id>Q15915</id>
        <label>ZIC1</label>
    </interactant>
    <organismsDiffer>false</organismsDiffer>
    <experiments>3</experiments>
</comment>
<comment type="interaction">
    <interactant intactId="EBI-740595">
        <id>Q9UMX1</id>
    </interactant>
    <interactant intactId="EBI-10265237">
        <id>Q8NC26</id>
        <label>ZNF114</label>
    </interactant>
    <organismsDiffer>false</organismsDiffer>
    <experiments>3</experiments>
</comment>
<comment type="interaction">
    <interactant intactId="EBI-740595">
        <id>Q9UMX1</id>
    </interactant>
    <interactant intactId="EBI-373456">
        <id>Q9Y3S2</id>
        <label>ZNF330</label>
    </interactant>
    <organismsDiffer>false</organismsDiffer>
    <experiments>3</experiments>
</comment>
<comment type="interaction">
    <interactant intactId="EBI-740595">
        <id>Q9UMX1</id>
    </interactant>
    <interactant intactId="EBI-740232">
        <id>Q9NWS9-2</id>
        <label>ZNF446</label>
    </interactant>
    <organismsDiffer>false</organismsDiffer>
    <experiments>4</experiments>
</comment>
<comment type="interaction">
    <interactant intactId="EBI-740595">
        <id>Q9UMX1</id>
    </interactant>
    <interactant intactId="EBI-4395497">
        <id>Q9BV97</id>
        <label>ZNF747</label>
    </interactant>
    <organismsDiffer>false</organismsDiffer>
    <experiments>8</experiments>
</comment>
<comment type="interaction">
    <interactant intactId="EBI-740595">
        <id>Q9UMX1</id>
    </interactant>
    <interactant intactId="EBI-10226414">
        <id>Q0D2J5</id>
        <label>ZNF763</label>
    </interactant>
    <organismsDiffer>false</organismsDiffer>
    <experiments>3</experiments>
</comment>
<comment type="interaction">
    <interactant intactId="EBI-740595">
        <id>Q9UMX1</id>
    </interactant>
    <interactant intactId="EBI-745775">
        <id>Q96H86</id>
        <label>ZNF764</label>
    </interactant>
    <organismsDiffer>false</organismsDiffer>
    <experiments>9</experiments>
</comment>
<comment type="interaction">
    <interactant intactId="EBI-740595">
        <id>Q9UMX1</id>
    </interactant>
    <interactant intactId="EBI-3919096">
        <id>Q8TBC5</id>
        <label>ZSCAN18</label>
    </interactant>
    <organismsDiffer>false</organismsDiffer>
    <experiments>4</experiments>
</comment>
<comment type="interaction">
    <interactant intactId="EBI-740595">
        <id>Q9UMX1</id>
    </interactant>
    <interactant intactId="EBI-9344284">
        <id>Q0VGT2</id>
        <label>Gli2</label>
    </interactant>
    <organismsDiffer>true</organismsDiffer>
    <experiments>3</experiments>
</comment>
<comment type="interaction">
    <interactant intactId="EBI-740615">
        <id>Q9UMX1-1</id>
    </interactant>
    <interactant intactId="EBI-308084">
        <id>P08151</id>
        <label>GLI1</label>
    </interactant>
    <organismsDiffer>false</organismsDiffer>
    <experiments>2</experiments>
</comment>
<comment type="interaction">
    <interactant intactId="EBI-740621">
        <id>Q9UMX1-2</id>
    </interactant>
    <interactant intactId="EBI-308084">
        <id>P08151</id>
        <label>GLI1</label>
    </interactant>
    <organismsDiffer>false</organismsDiffer>
    <experiments>4</experiments>
</comment>
<comment type="subcellular location">
    <subcellularLocation>
        <location evidence="3 15">Cytoplasm</location>
    </subcellularLocation>
    <subcellularLocation>
        <location evidence="3 15">Nucleus</location>
    </subcellularLocation>
</comment>
<comment type="alternative products">
    <event type="alternative splicing"/>
    <isoform>
        <id>Q9UMX1-1</id>
        <name>1</name>
        <name>Su(fu)484</name>
        <sequence type="displayed"/>
    </isoform>
    <isoform>
        <id>Q9UMX1-2</id>
        <name>2</name>
        <name>Su(fu)433</name>
        <sequence type="described" ref="VSP_013278 VSP_013279"/>
    </isoform>
    <isoform>
        <id>Q9UMX1-3</id>
        <name>3</name>
        <sequence type="described" ref="VSP_013280"/>
    </isoform>
</comment>
<comment type="tissue specificity">
    <text evidence="3 4">Ubiquitous in adult tissues. Detected in osteoblasts of the perichondrium in the developing limb of 12-week old embryos. Isoform 1 is detected in fetal brain, lung, kidney and testis. Isoform 2 is detected in fetal testis, and at much lower levels in fetal brain, lung and kidney.</text>
</comment>
<comment type="PTM">
    <text evidence="14">Polyubiquitinated at Lys-257 by the SCF(FBXL17) complex, leading to its subsequent degradation and allowing the release of GLI1 for proper hedgehog/smoothened signal transduction (PubMed:27234298). Ubiquitination is impaired by phosphorylation at Ser-342, Ser-346, Ser-352 and Thr-353 (PubMed:27234298).</text>
</comment>
<comment type="PTM">
    <text evidence="14">Phosphorylation at Ser-342, Ser-346, Ser-352 and Thr-353 prevents ubiquitination by the SCF(FBXL17) complex.</text>
</comment>
<comment type="disease" evidence="6">
    <disease id="DI-01958">
        <name>Medulloblastoma</name>
        <acronym>MDB</acronym>
        <description>Malignant, invasive embryonal tumor of the cerebellum with a preferential manifestation in children.</description>
        <dbReference type="MIM" id="155255"/>
    </disease>
    <text>The disease is caused by variants affecting the gene represented in this entry.</text>
</comment>
<comment type="disease" evidence="15">
    <disease id="DI-05134">
        <name>Joubert syndrome 32</name>
        <acronym>JBTS32</acronym>
        <description>A form of Joubert syndrome, a disorder presenting with cerebellar ataxia, oculomotor apraxia, hypotonia, neonatal breathing abnormalities and psychomotor delay. Neuroradiologically, it is characterized by cerebellar vermian hypoplasia/aplasia, thickened and reoriented superior cerebellar peduncles, and an abnormally large interpeduncular fossa, giving the appearance of a molar tooth on transaxial slices (molar tooth sign). Additional variable features include retinal dystrophy, renal disease, liver fibrosis, and polydactyly. JBTS32 inheritance is autosomal recessive.</description>
        <dbReference type="MIM" id="617757"/>
    </disease>
    <text>The disease is caused by variants affecting the gene represented in this entry.</text>
</comment>
<comment type="disease" evidence="9">
    <disease id="DI-06664">
        <name>Basal cell nevus syndrome 2</name>
        <acronym>BCNS2</acronym>
        <description>A form of basal cell nevus syndrome, a disease characterized by nevoid basal cell carcinomas and developmental abnormalities such as rib and craniofacial alterations, polydactyly, syndactyly, and spina bifida. In addition, the patients suffer from a multitude of tumors like fibromas of the ovaries and heart, cysts of the skin, jaws and mesentery, as well as medulloblastomas and meningiomas.</description>
        <dbReference type="MIM" id="620343"/>
    </disease>
    <text>The disease is caused by variants affecting the gene represented in this entry.</text>
</comment>
<comment type="miscellaneous">
    <molecule>Isoform 1</molecule>
    <text>Major isoform.</text>
</comment>
<comment type="similarity">
    <text evidence="20">Belongs to the SUFU family.</text>
</comment>
<name>SUFU_HUMAN</name>
<proteinExistence type="evidence at protein level"/>
<reference key="1">
    <citation type="journal article" date="1999" name="J. Cell Sci.">
        <title>Characterization of the human suppressor of fused, a negative regulator of the zinc-finger transcription factor Gli.</title>
        <authorList>
            <person name="Stone D.M."/>
            <person name="Murone M."/>
            <person name="Luoh S.-M."/>
            <person name="Ye W."/>
            <person name="Armanini M.P."/>
            <person name="Gurney A."/>
            <person name="Phillips H."/>
            <person name="Brush J."/>
            <person name="Goddard A."/>
            <person name="deSauvage F.J."/>
            <person name="Rosenthal A."/>
        </authorList>
    </citation>
    <scope>NUCLEOTIDE SEQUENCE [MRNA] (ISOFORMS 1; 2 AND 3)</scope>
    <scope>FUNCTION</scope>
    <scope>INTERACTION WITH GLI1; GLI2; GLI3 AND BTRC</scope>
    <scope>HOMODIMERIZATION</scope>
    <scope>SUBCELLULAR LOCATION</scope>
    <scope>TISSUE SPECIFICITY</scope>
    <source>
        <tissue>Fetal kidney</tissue>
        <tissue>Fetal lung</tissue>
        <tissue>Fetal testis</tissue>
    </source>
</reference>
<reference key="2">
    <citation type="journal article" date="1999" name="Nat. Cell Biol.">
        <title>Mammalian suppressor-of-fused modulates nuclear-cytoplasmic shuttling of Gli-1.</title>
        <authorList>
            <person name="Kogerman P."/>
            <person name="Grimm T."/>
            <person name="Kogerman L."/>
            <person name="Krause D."/>
            <person name="Unden A.B."/>
            <person name="Sandstedt B."/>
            <person name="Toftgaard R."/>
            <person name="Zaphiropoulos P.G."/>
        </authorList>
    </citation>
    <scope>NUCLEOTIDE SEQUENCE [MRNA] (ISOFORM 1)</scope>
    <scope>FUNCTION</scope>
    <scope>INTERACTION WITH GLI1</scope>
    <scope>SUBCELLULAR LOCATION</scope>
    <scope>TISSUE SPECIFICITY</scope>
</reference>
<reference key="3">
    <citation type="journal article" date="2002" name="Nat. Genet.">
        <title>Mutations in SUFU predispose to medulloblastoma.</title>
        <authorList>
            <person name="Taylor M.D."/>
            <person name="Liu L."/>
            <person name="Raffel C."/>
            <person name="Hui C.-C."/>
            <person name="Mainprize T.G."/>
            <person name="Zhang X."/>
            <person name="Agatep R."/>
            <person name="Chiappa S."/>
            <person name="Gao L."/>
            <person name="Lowrance A."/>
            <person name="Hao A."/>
            <person name="Goldstein A.M."/>
            <person name="Stavrou T."/>
            <person name="Scherer S.W."/>
            <person name="Dura W.T."/>
            <person name="Wainwright B."/>
            <person name="Squire J.A."/>
            <person name="Rutka J.T."/>
            <person name="Hogg D."/>
        </authorList>
    </citation>
    <scope>NUCLEOTIDE SEQUENCE [GENOMIC DNA]</scope>
    <scope>FUNCTION</scope>
    <scope>VARIANTS LEU-15 AND SER-340</scope>
    <scope>INVOLVEMENT IN MDB</scope>
</reference>
<reference key="4">
    <citation type="journal article" date="2003" name="Genome Res.">
        <title>The secreted protein discovery initiative (SPDI), a large-scale effort to identify novel human secreted and transmembrane proteins: a bioinformatics assessment.</title>
        <authorList>
            <person name="Clark H.F."/>
            <person name="Gurney A.L."/>
            <person name="Abaya E."/>
            <person name="Baker K."/>
            <person name="Baldwin D.T."/>
            <person name="Brush J."/>
            <person name="Chen J."/>
            <person name="Chow B."/>
            <person name="Chui C."/>
            <person name="Crowley C."/>
            <person name="Currell B."/>
            <person name="Deuel B."/>
            <person name="Dowd P."/>
            <person name="Eaton D."/>
            <person name="Foster J.S."/>
            <person name="Grimaldi C."/>
            <person name="Gu Q."/>
            <person name="Hass P.E."/>
            <person name="Heldens S."/>
            <person name="Huang A."/>
            <person name="Kim H.S."/>
            <person name="Klimowski L."/>
            <person name="Jin Y."/>
            <person name="Johnson S."/>
            <person name="Lee J."/>
            <person name="Lewis L."/>
            <person name="Liao D."/>
            <person name="Mark M.R."/>
            <person name="Robbie E."/>
            <person name="Sanchez C."/>
            <person name="Schoenfeld J."/>
            <person name="Seshagiri S."/>
            <person name="Simmons L."/>
            <person name="Singh J."/>
            <person name="Smith V."/>
            <person name="Stinson J."/>
            <person name="Vagts A."/>
            <person name="Vandlen R.L."/>
            <person name="Watanabe C."/>
            <person name="Wieand D."/>
            <person name="Woods K."/>
            <person name="Xie M.-H."/>
            <person name="Yansura D.G."/>
            <person name="Yi S."/>
            <person name="Yu G."/>
            <person name="Yuan J."/>
            <person name="Zhang M."/>
            <person name="Zhang Z."/>
            <person name="Goddard A.D."/>
            <person name="Wood W.I."/>
            <person name="Godowski P.J."/>
            <person name="Gray A.M."/>
        </authorList>
    </citation>
    <scope>NUCLEOTIDE SEQUENCE [LARGE SCALE MRNA] (ISOFORM 2)</scope>
</reference>
<reference key="5">
    <citation type="journal article" date="2004" name="Nature">
        <title>The DNA sequence and comparative analysis of human chromosome 10.</title>
        <authorList>
            <person name="Deloukas P."/>
            <person name="Earthrowl M.E."/>
            <person name="Grafham D.V."/>
            <person name="Rubenfield M."/>
            <person name="French L."/>
            <person name="Steward C.A."/>
            <person name="Sims S.K."/>
            <person name="Jones M.C."/>
            <person name="Searle S."/>
            <person name="Scott C."/>
            <person name="Howe K."/>
            <person name="Hunt S.E."/>
            <person name="Andrews T.D."/>
            <person name="Gilbert J.G.R."/>
            <person name="Swarbreck D."/>
            <person name="Ashurst J.L."/>
            <person name="Taylor A."/>
            <person name="Battles J."/>
            <person name="Bird C.P."/>
            <person name="Ainscough R."/>
            <person name="Almeida J.P."/>
            <person name="Ashwell R.I.S."/>
            <person name="Ambrose K.D."/>
            <person name="Babbage A.K."/>
            <person name="Bagguley C.L."/>
            <person name="Bailey J."/>
            <person name="Banerjee R."/>
            <person name="Bates K."/>
            <person name="Beasley H."/>
            <person name="Bray-Allen S."/>
            <person name="Brown A.J."/>
            <person name="Brown J.Y."/>
            <person name="Burford D.C."/>
            <person name="Burrill W."/>
            <person name="Burton J."/>
            <person name="Cahill P."/>
            <person name="Camire D."/>
            <person name="Carter N.P."/>
            <person name="Chapman J.C."/>
            <person name="Clark S.Y."/>
            <person name="Clarke G."/>
            <person name="Clee C.M."/>
            <person name="Clegg S."/>
            <person name="Corby N."/>
            <person name="Coulson A."/>
            <person name="Dhami P."/>
            <person name="Dutta I."/>
            <person name="Dunn M."/>
            <person name="Faulkner L."/>
            <person name="Frankish A."/>
            <person name="Frankland J.A."/>
            <person name="Garner P."/>
            <person name="Garnett J."/>
            <person name="Gribble S."/>
            <person name="Griffiths C."/>
            <person name="Grocock R."/>
            <person name="Gustafson E."/>
            <person name="Hammond S."/>
            <person name="Harley J.L."/>
            <person name="Hart E."/>
            <person name="Heath P.D."/>
            <person name="Ho T.P."/>
            <person name="Hopkins B."/>
            <person name="Horne J."/>
            <person name="Howden P.J."/>
            <person name="Huckle E."/>
            <person name="Hynds C."/>
            <person name="Johnson C."/>
            <person name="Johnson D."/>
            <person name="Kana A."/>
            <person name="Kay M."/>
            <person name="Kimberley A.M."/>
            <person name="Kershaw J.K."/>
            <person name="Kokkinaki M."/>
            <person name="Laird G.K."/>
            <person name="Lawlor S."/>
            <person name="Lee H.M."/>
            <person name="Leongamornlert D.A."/>
            <person name="Laird G."/>
            <person name="Lloyd C."/>
            <person name="Lloyd D.M."/>
            <person name="Loveland J."/>
            <person name="Lovell J."/>
            <person name="McLaren S."/>
            <person name="McLay K.E."/>
            <person name="McMurray A."/>
            <person name="Mashreghi-Mohammadi M."/>
            <person name="Matthews L."/>
            <person name="Milne S."/>
            <person name="Nickerson T."/>
            <person name="Nguyen M."/>
            <person name="Overton-Larty E."/>
            <person name="Palmer S.A."/>
            <person name="Pearce A.V."/>
            <person name="Peck A.I."/>
            <person name="Pelan S."/>
            <person name="Phillimore B."/>
            <person name="Porter K."/>
            <person name="Rice C.M."/>
            <person name="Rogosin A."/>
            <person name="Ross M.T."/>
            <person name="Sarafidou T."/>
            <person name="Sehra H.K."/>
            <person name="Shownkeen R."/>
            <person name="Skuce C.D."/>
            <person name="Smith M."/>
            <person name="Standring L."/>
            <person name="Sycamore N."/>
            <person name="Tester J."/>
            <person name="Thorpe A."/>
            <person name="Torcasso W."/>
            <person name="Tracey A."/>
            <person name="Tromans A."/>
            <person name="Tsolas J."/>
            <person name="Wall M."/>
            <person name="Walsh J."/>
            <person name="Wang H."/>
            <person name="Weinstock K."/>
            <person name="West A.P."/>
            <person name="Willey D.L."/>
            <person name="Whitehead S.L."/>
            <person name="Wilming L."/>
            <person name="Wray P.W."/>
            <person name="Young L."/>
            <person name="Chen Y."/>
            <person name="Lovering R.C."/>
            <person name="Moschonas N.K."/>
            <person name="Siebert R."/>
            <person name="Fechtel K."/>
            <person name="Bentley D."/>
            <person name="Durbin R.M."/>
            <person name="Hubbard T."/>
            <person name="Doucette-Stamm L."/>
            <person name="Beck S."/>
            <person name="Smith D.R."/>
            <person name="Rogers J."/>
        </authorList>
    </citation>
    <scope>NUCLEOTIDE SEQUENCE [LARGE SCALE GENOMIC DNA]</scope>
</reference>
<reference key="6">
    <citation type="journal article" date="2004" name="Genome Res.">
        <title>The status, quality, and expansion of the NIH full-length cDNA project: the Mammalian Gene Collection (MGC).</title>
        <authorList>
            <consortium name="The MGC Project Team"/>
        </authorList>
    </citation>
    <scope>NUCLEOTIDE SEQUENCE [LARGE SCALE MRNA] (ISOFORM 1)</scope>
    <source>
        <tissue>Muscle</tissue>
    </source>
</reference>
<reference key="7">
    <citation type="journal article" date="1999" name="Dev. Genes Evol.">
        <title>Suppressor of fused gene involved in hedgehog signal transduction in Drosophila melanogaster is conserved in mammals.</title>
        <authorList>
            <person name="Delattre M."/>
            <person name="Briand S."/>
            <person name="Paces-Fessy M."/>
            <person name="Blanchet-Tournier M.-F."/>
        </authorList>
    </citation>
    <scope>NUCLEOTIDE SEQUENCE [MRNA] OF 3-484 (ISOFORM 1)</scope>
    <source>
        <tissue>Neuron</tissue>
    </source>
</reference>
<reference key="8">
    <citation type="journal article" date="2007" name="BMC Genomics">
        <title>The full-ORF clone resource of the German cDNA consortium.</title>
        <authorList>
            <person name="Bechtel S."/>
            <person name="Rosenfelder H."/>
            <person name="Duda A."/>
            <person name="Schmidt C.P."/>
            <person name="Ernst U."/>
            <person name="Wellenreuther R."/>
            <person name="Mehrle A."/>
            <person name="Schuster C."/>
            <person name="Bahr A."/>
            <person name="Bloecker H."/>
            <person name="Heubner D."/>
            <person name="Hoerlein A."/>
            <person name="Michel G."/>
            <person name="Wedler H."/>
            <person name="Koehrer K."/>
            <person name="Ottenwaelder B."/>
            <person name="Poustka A."/>
            <person name="Wiemann S."/>
            <person name="Schupp I."/>
        </authorList>
    </citation>
    <scope>NUCLEOTIDE SEQUENCE [LARGE SCALE MRNA] OF 442-484 (ISOFORM 1)</scope>
    <source>
        <tissue>Testis</tissue>
    </source>
</reference>
<reference key="9">
    <citation type="journal article" date="2000" name="Nat. Cell Biol.">
        <title>Gli regulation by the opposing activities of fused and suppressor of fused.</title>
        <authorList>
            <person name="Murone M."/>
            <person name="Luoh S.-L."/>
            <person name="Stone D."/>
            <person name="Li W."/>
            <person name="Gurney A."/>
            <person name="Armanini M."/>
            <person name="Grey C."/>
            <person name="Rosenthal A."/>
            <person name="de Sauvage F.J."/>
        </authorList>
    </citation>
    <scope>FUNCTION</scope>
    <scope>INTERACTION WITH STK36</scope>
</reference>
<reference key="10">
    <citation type="journal article" date="2008" name="Proc. Natl. Acad. Sci. U.S.A.">
        <title>A quantitative atlas of mitotic phosphorylation.</title>
        <authorList>
            <person name="Dephoure N."/>
            <person name="Zhou C."/>
            <person name="Villen J."/>
            <person name="Beausoleil S.A."/>
            <person name="Bakalarski C.E."/>
            <person name="Elledge S.J."/>
            <person name="Gygi S.P."/>
        </authorList>
    </citation>
    <scope>PHOSPHORYLATION [LARGE SCALE ANALYSIS] AT SER-481</scope>
    <scope>IDENTIFICATION BY MASS SPECTROMETRY [LARGE SCALE ANALYSIS]</scope>
    <source>
        <tissue>Cervix carcinoma</tissue>
    </source>
</reference>
<reference key="11">
    <citation type="journal article" date="2009" name="Am. J. Med. Genet. A">
        <title>Identification of a SUFU germline mutation in a family with Gorlin syndrome.</title>
        <authorList>
            <person name="Pastorino L."/>
            <person name="Ghiorzo P."/>
            <person name="Nasti S."/>
            <person name="Battistuzzi L."/>
            <person name="Cusano R."/>
            <person name="Marzocchi C."/>
            <person name="Garre M.L."/>
            <person name="Clementi M."/>
            <person name="Scarra G.B."/>
        </authorList>
    </citation>
    <scope>INVOLVEMENT IN BCNS2</scope>
</reference>
<reference key="12">
    <citation type="journal article" date="2009" name="Science">
        <title>Lysine acetylation targets protein complexes and co-regulates major cellular functions.</title>
        <authorList>
            <person name="Choudhary C."/>
            <person name="Kumar C."/>
            <person name="Gnad F."/>
            <person name="Nielsen M.L."/>
            <person name="Rehman M."/>
            <person name="Walther T.C."/>
            <person name="Olsen J.V."/>
            <person name="Mann M."/>
        </authorList>
    </citation>
    <scope>ACETYLATION [LARGE SCALE ANALYSIS] AT LYS-303</scope>
    <scope>IDENTIFICATION BY MASS SPECTROMETRY [LARGE SCALE ANALYSIS]</scope>
</reference>
<reference key="13">
    <citation type="journal article" date="2010" name="J. Biol. Chem.">
        <title>Dual function of UNC-51-like kinase 3 (Ulk3) in the Sonic hedgehog signaling pathway.</title>
        <authorList>
            <person name="Maloverjan A."/>
            <person name="Piirsoo M."/>
            <person name="Kasak L."/>
            <person name="Peil L."/>
            <person name="Osterlund T."/>
            <person name="Kogerman P."/>
        </authorList>
    </citation>
    <scope>INTERACTION WITH ULK3</scope>
</reference>
<reference key="14">
    <citation type="journal article" date="2011" name="BMC Syst. Biol.">
        <title>Initial characterization of the human central proteome.</title>
        <authorList>
            <person name="Burkard T.R."/>
            <person name="Planyavsky M."/>
            <person name="Kaupe I."/>
            <person name="Breitwieser F.P."/>
            <person name="Buerckstuemmer T."/>
            <person name="Bennett K.L."/>
            <person name="Superti-Furga G."/>
            <person name="Colinge J."/>
        </authorList>
    </citation>
    <scope>IDENTIFICATION BY MASS SPECTROMETRY [LARGE SCALE ANALYSIS]</scope>
</reference>
<reference key="15">
    <citation type="journal article" date="2012" name="Cell. Signal.">
        <title>Rab23 negatively regulates Gli1 transcriptional factor in a Su(Fu)-dependent manner.</title>
        <authorList>
            <person name="Chi S."/>
            <person name="Xie G."/>
            <person name="Liu H."/>
            <person name="Chen K."/>
            <person name="Zhang X."/>
            <person name="Li C."/>
            <person name="Xie J."/>
        </authorList>
    </citation>
    <scope>INTERACTION WITH RAB23</scope>
    <scope>FUNCTION</scope>
    <scope>SUBCELLULAR LOCATION</scope>
</reference>
<reference key="16">
    <citation type="journal article" date="2013" name="J. Proteome Res.">
        <title>Toward a comprehensive characterization of a human cancer cell phosphoproteome.</title>
        <authorList>
            <person name="Zhou H."/>
            <person name="Di Palma S."/>
            <person name="Preisinger C."/>
            <person name="Peng M."/>
            <person name="Polat A.N."/>
            <person name="Heck A.J."/>
            <person name="Mohammed S."/>
        </authorList>
    </citation>
    <scope>PHOSPHORYLATION [LARGE SCALE ANALYSIS] AT SER-301; SER-342 AND SER-346</scope>
    <scope>IDENTIFICATION BY MASS SPECTROMETRY [LARGE SCALE ANALYSIS]</scope>
    <source>
        <tissue>Cervix carcinoma</tissue>
    </source>
</reference>
<reference key="17">
    <citation type="journal article" date="2016" name="EMBO J.">
        <title>SCF (Fbxl17) ubiquitylation of Sufu regulates Hedgehog signaling and medulloblastoma development.</title>
        <authorList>
            <person name="Raducu M."/>
            <person name="Fung E."/>
            <person name="Serres S."/>
            <person name="Infante P."/>
            <person name="Barberis A."/>
            <person name="Fischer R."/>
            <person name="Bristow C."/>
            <person name="Thezenas M.L."/>
            <person name="Finta C."/>
            <person name="Christianson J.C."/>
            <person name="Buffa F.M."/>
            <person name="Kessler B.M."/>
            <person name="Sibson N.R."/>
            <person name="Di Marcotullio L."/>
            <person name="Toftgaard R."/>
            <person name="D'Angiolella V."/>
        </authorList>
    </citation>
    <scope>FUNCTION</scope>
    <scope>UBIQUITINATION AT LYS-257</scope>
    <scope>PHOSPHORYLATION AT SER-342; SER-346; SER-352 AND THR-353</scope>
    <scope>MUTAGENESIS OF LYS-257 AND 342-SER--SER-346</scope>
</reference>
<reference key="18">
    <citation type="journal article" date="2017" name="Am. J. Hum. Genet.">
        <title>Hypomorphic Recessive Variants in SUFU Impair the Sonic Hedgehog Pathway and Cause Joubert Syndrome with Cranio-facial and Skeletal Defects.</title>
        <authorList>
            <person name="De Mori R."/>
            <person name="Romani M."/>
            <person name="D'Arrigo S."/>
            <person name="Zaki M.S."/>
            <person name="Lorefice E."/>
            <person name="Tardivo S."/>
            <person name="Biagini T."/>
            <person name="Stanley V."/>
            <person name="Musaev D."/>
            <person name="Fluss J."/>
            <person name="Micalizzi A."/>
            <person name="Nuovo S."/>
            <person name="Illi B."/>
            <person name="Chiapparini L."/>
            <person name="Di Marcotullio L."/>
            <person name="Issa M.Y."/>
            <person name="Anello D."/>
            <person name="Casella A."/>
            <person name="Ginevrino M."/>
            <person name="Leggins A.S."/>
            <person name="Roosing S."/>
            <person name="Alfonsi R."/>
            <person name="Rosati J."/>
            <person name="Schot R."/>
            <person name="Mancini G.M.S."/>
            <person name="Bertini E."/>
            <person name="Dobyns W.B."/>
            <person name="Mazza T."/>
            <person name="Gleeson J.G."/>
            <person name="Valente E.M."/>
        </authorList>
    </citation>
    <scope>FUNCTION</scope>
    <scope>SUBCELLULAR LOCATION</scope>
    <scope>INTERACTION WITH GLI1 AND GLI3</scope>
    <scope>INVOLVEMENT IN JBTS32</scope>
    <scope>VARIANTS JBTS32 ARG-176 AND THR-406</scope>
    <scope>CHARACTERIZATION OF VARIANTS JBTS32 ARG-176 AND THR-406</scope>
    <scope>VARIANTS VAL-19; VAL-37; MET-77; GLN-289; VAL-293; 299-ARG--HIS-484 DEL; LEU-382; ARG-442 AND ASN-481</scope>
</reference>
<reference key="19">
    <citation type="journal article" date="2017" name="Nat. Struct. Mol. Biol.">
        <title>Site-specific mapping of the human SUMO proteome reveals co-modification with phosphorylation.</title>
        <authorList>
            <person name="Hendriks I.A."/>
            <person name="Lyon D."/>
            <person name="Young C."/>
            <person name="Jensen L.J."/>
            <person name="Vertegaal A.C."/>
            <person name="Nielsen M.L."/>
        </authorList>
    </citation>
    <scope>SUMOYLATION [LARGE SCALE ANALYSIS] AT LYS-321</scope>
    <scope>IDENTIFICATION BY MASS SPECTROMETRY [LARGE SCALE ANALYSIS]</scope>
</reference>
<reference key="20">
    <citation type="journal article" date="2004" name="Mol. Cell. Biol.">
        <title>Suppressor of fused regulates Gli activity through a dual binding mechanism.</title>
        <authorList>
            <person name="Merchant M."/>
            <person name="Vajdos F.F."/>
            <person name="Ultsch M."/>
            <person name="Maun H.R."/>
            <person name="Wendt U."/>
            <person name="Cannon J."/>
            <person name="Desmarais W."/>
            <person name="Lazarus R.A."/>
            <person name="de Vos A.M."/>
            <person name="de Sauvage F.J."/>
        </authorList>
    </citation>
    <scope>X-RAY CRYSTALLOGRAPHY (2.65 ANGSTROMS) OF 27-268</scope>
    <scope>FUNCTION</scope>
    <scope>INTERACTION WITH GLI1</scope>
    <scope>MUTAGENESIS OF GLU-106; ASP-111; THR-128; GLU-152; ASP-159; GLU-181; GLU-221 AND ASP-262</scope>
</reference>
<reference key="21">
    <citation type="journal article" date="2013" name="Acta Crystallogr. D">
        <title>Structural basis of SUFU-GLI interaction in human Hedgehog signalling regulation.</title>
        <authorList>
            <person name="Cherry A.L."/>
            <person name="Finta C."/>
            <person name="Karlstrom M."/>
            <person name="Jin Q."/>
            <person name="Schwend T."/>
            <person name="Astorga-Wells J."/>
            <person name="Zubarev R.A."/>
            <person name="Del Campo M."/>
            <person name="Criswell A.R."/>
            <person name="de Sanctis D."/>
            <person name="Jovine L."/>
            <person name="Toftgard R."/>
        </authorList>
    </citation>
    <scope>X-RAY CRYSTALLOGRAPHY (2.80 ANGSTROMS) OF 32-278 AND 361-483 IN COMPLEXES WITH GLI1 AND GLI3</scope>
    <scope>INTRINSICALLY DISORDERED REGION</scope>
    <scope>FUNCTION</scope>
    <scope>INTERACTION WITH GLI1 AND GLI3</scope>
</reference>
<reference key="22">
    <citation type="journal article" date="2013" name="Nat. Commun.">
        <title>Structural insight into the mutual recognition and regulation between Suppressor of Fused and Gli/Ci.</title>
        <authorList>
            <person name="Zhang Y."/>
            <person name="Fu L."/>
            <person name="Qi X."/>
            <person name="Zhang Z."/>
            <person name="Xia Y."/>
            <person name="Jia J."/>
            <person name="Jiang J."/>
            <person name="Zhao Y."/>
            <person name="Wu G."/>
        </authorList>
    </citation>
    <scope>X-RAY CRYSTALLOGRAPHY (1.70 ANGSTROMS) IN COMPLEX WITH GLI1</scope>
    <scope>INTERACTION WITH GLI1 AND GLI2</scope>
    <scope>FUNCTION</scope>
    <scope>MUTAGENESIS OF TYR-147; ASP-159 AND LEU-380</scope>
</reference>
<accession>Q9UMX1</accession>
<accession>Q7LCP7</accession>
<accession>Q9NT90</accession>
<accession>Q9NZ07</accession>
<accession>Q9UHK2</accession>
<accession>Q9UHM8</accession>
<accession>Q9UMY0</accession>
<evidence type="ECO:0000250" key="1">
    <source>
        <dbReference type="UniProtKB" id="Q9Z0P7"/>
    </source>
</evidence>
<evidence type="ECO:0000256" key="2">
    <source>
        <dbReference type="SAM" id="MobiDB-lite"/>
    </source>
</evidence>
<evidence type="ECO:0000269" key="3">
    <source>
    </source>
</evidence>
<evidence type="ECO:0000269" key="4">
    <source>
    </source>
</evidence>
<evidence type="ECO:0000269" key="5">
    <source>
    </source>
</evidence>
<evidence type="ECO:0000269" key="6">
    <source>
    </source>
</evidence>
<evidence type="ECO:0000269" key="7">
    <source>
    </source>
</evidence>
<evidence type="ECO:0000269" key="8">
    <source>
    </source>
</evidence>
<evidence type="ECO:0000269" key="9">
    <source>
    </source>
</evidence>
<evidence type="ECO:0000269" key="10">
    <source>
    </source>
</evidence>
<evidence type="ECO:0000269" key="11">
    <source>
    </source>
</evidence>
<evidence type="ECO:0000269" key="12">
    <source>
    </source>
</evidence>
<evidence type="ECO:0000269" key="13">
    <source>
    </source>
</evidence>
<evidence type="ECO:0000269" key="14">
    <source>
    </source>
</evidence>
<evidence type="ECO:0000269" key="15">
    <source>
    </source>
</evidence>
<evidence type="ECO:0000303" key="16">
    <source>
    </source>
</evidence>
<evidence type="ECO:0000303" key="17">
    <source>
    </source>
</evidence>
<evidence type="ECO:0000303" key="18">
    <source>
    </source>
</evidence>
<evidence type="ECO:0000303" key="19">
    <source>
    </source>
</evidence>
<evidence type="ECO:0000305" key="20"/>
<evidence type="ECO:0000312" key="21">
    <source>
        <dbReference type="HGNC" id="HGNC:16466"/>
    </source>
</evidence>
<evidence type="ECO:0007744" key="22">
    <source>
    </source>
</evidence>
<evidence type="ECO:0007744" key="23">
    <source>
    </source>
</evidence>
<evidence type="ECO:0007744" key="24">
    <source>
    </source>
</evidence>
<evidence type="ECO:0007744" key="25">
    <source>
    </source>
</evidence>
<evidence type="ECO:0007829" key="26">
    <source>
        <dbReference type="PDB" id="4BL9"/>
    </source>
</evidence>
<evidence type="ECO:0007829" key="27">
    <source>
        <dbReference type="PDB" id="4BLB"/>
    </source>
</evidence>
<evidence type="ECO:0007829" key="28">
    <source>
        <dbReference type="PDB" id="4KM8"/>
    </source>
</evidence>
<evidence type="ECO:0007829" key="29">
    <source>
        <dbReference type="PDB" id="4KMD"/>
    </source>
</evidence>
<dbReference type="EMBL" id="AF144231">
    <property type="protein sequence ID" value="AAF23890.1"/>
    <property type="molecule type" value="mRNA"/>
</dbReference>
<dbReference type="EMBL" id="AF159447">
    <property type="protein sequence ID" value="AAF23893.1"/>
    <property type="molecule type" value="mRNA"/>
</dbReference>
<dbReference type="EMBL" id="AF222345">
    <property type="protein sequence ID" value="AAF35866.1"/>
    <property type="molecule type" value="mRNA"/>
</dbReference>
<dbReference type="EMBL" id="AF175770">
    <property type="protein sequence ID" value="AAD50501.1"/>
    <property type="molecule type" value="mRNA"/>
</dbReference>
<dbReference type="EMBL" id="AY081829">
    <property type="protein sequence ID" value="AAM08947.1"/>
    <property type="molecule type" value="Genomic_DNA"/>
</dbReference>
<dbReference type="EMBL" id="AY081818">
    <property type="protein sequence ID" value="AAM08947.1"/>
    <property type="status" value="JOINED"/>
    <property type="molecule type" value="Genomic_DNA"/>
</dbReference>
<dbReference type="EMBL" id="AY081819">
    <property type="protein sequence ID" value="AAM08947.1"/>
    <property type="status" value="JOINED"/>
    <property type="molecule type" value="Genomic_DNA"/>
</dbReference>
<dbReference type="EMBL" id="AY081820">
    <property type="protein sequence ID" value="AAM08947.1"/>
    <property type="status" value="JOINED"/>
    <property type="molecule type" value="Genomic_DNA"/>
</dbReference>
<dbReference type="EMBL" id="AY081822">
    <property type="protein sequence ID" value="AAM08947.1"/>
    <property type="status" value="JOINED"/>
    <property type="molecule type" value="Genomic_DNA"/>
</dbReference>
<dbReference type="EMBL" id="AY081824">
    <property type="protein sequence ID" value="AAM08947.1"/>
    <property type="status" value="JOINED"/>
    <property type="molecule type" value="Genomic_DNA"/>
</dbReference>
<dbReference type="EMBL" id="AY081825">
    <property type="protein sequence ID" value="AAM08947.1"/>
    <property type="status" value="JOINED"/>
    <property type="molecule type" value="Genomic_DNA"/>
</dbReference>
<dbReference type="EMBL" id="AY081821">
    <property type="protein sequence ID" value="AAM08947.1"/>
    <property type="status" value="JOINED"/>
    <property type="molecule type" value="Genomic_DNA"/>
</dbReference>
<dbReference type="EMBL" id="AY081823">
    <property type="protein sequence ID" value="AAM08947.1"/>
    <property type="status" value="JOINED"/>
    <property type="molecule type" value="Genomic_DNA"/>
</dbReference>
<dbReference type="EMBL" id="AY081826">
    <property type="protein sequence ID" value="AAM08947.1"/>
    <property type="status" value="JOINED"/>
    <property type="molecule type" value="Genomic_DNA"/>
</dbReference>
<dbReference type="EMBL" id="AY081828">
    <property type="protein sequence ID" value="AAM08947.1"/>
    <property type="status" value="JOINED"/>
    <property type="molecule type" value="Genomic_DNA"/>
</dbReference>
<dbReference type="EMBL" id="AY081827">
    <property type="protein sequence ID" value="AAM08947.1"/>
    <property type="status" value="JOINED"/>
    <property type="molecule type" value="Genomic_DNA"/>
</dbReference>
<dbReference type="EMBL" id="AY358550">
    <property type="protein sequence ID" value="AAQ88914.1"/>
    <property type="molecule type" value="mRNA"/>
</dbReference>
<dbReference type="EMBL" id="AL121928">
    <property type="status" value="NOT_ANNOTATED_CDS"/>
    <property type="molecule type" value="Genomic_DNA"/>
</dbReference>
<dbReference type="EMBL" id="AL157386">
    <property type="status" value="NOT_ANNOTATED_CDS"/>
    <property type="molecule type" value="Genomic_DNA"/>
</dbReference>
<dbReference type="EMBL" id="AL391121">
    <property type="status" value="NOT_ANNOTATED_CDS"/>
    <property type="molecule type" value="Genomic_DNA"/>
</dbReference>
<dbReference type="EMBL" id="BC013291">
    <property type="protein sequence ID" value="AAH13291.1"/>
    <property type="molecule type" value="mRNA"/>
</dbReference>
<dbReference type="EMBL" id="AF172319">
    <property type="protein sequence ID" value="AAD51655.1"/>
    <property type="molecule type" value="mRNA"/>
</dbReference>
<dbReference type="EMBL" id="AL137465">
    <property type="protein sequence ID" value="CAB70752.1"/>
    <property type="molecule type" value="mRNA"/>
</dbReference>
<dbReference type="CCDS" id="CCDS53571.1">
    <molecule id="Q9UMX1-2"/>
</dbReference>
<dbReference type="CCDS" id="CCDS7537.1">
    <molecule id="Q9UMX1-1"/>
</dbReference>
<dbReference type="PIR" id="T46409">
    <property type="entry name" value="T46409"/>
</dbReference>
<dbReference type="RefSeq" id="NP_001171604.1">
    <molecule id="Q9UMX1-2"/>
    <property type="nucleotide sequence ID" value="NM_001178133.2"/>
</dbReference>
<dbReference type="RefSeq" id="NP_057253.2">
    <molecule id="Q9UMX1-1"/>
    <property type="nucleotide sequence ID" value="NM_016169.3"/>
</dbReference>
<dbReference type="PDB" id="1M1L">
    <property type="method" value="X-ray"/>
    <property type="resolution" value="2.65 A"/>
    <property type="chains" value="A/B/C/D=27-262"/>
</dbReference>
<dbReference type="PDB" id="4BL8">
    <property type="method" value="X-ray"/>
    <property type="resolution" value="3.04 A"/>
    <property type="chains" value="A/B=32-483"/>
</dbReference>
<dbReference type="PDB" id="4BL9">
    <property type="method" value="X-ray"/>
    <property type="resolution" value="2.80 A"/>
    <property type="chains" value="A/B/C/D=32-278, A/B/C/D=361-483"/>
</dbReference>
<dbReference type="PDB" id="4BLA">
    <property type="method" value="X-ray"/>
    <property type="resolution" value="3.50 A"/>
    <property type="chains" value="A/B/C/D=32-278, A/B/C/D=361-483"/>
</dbReference>
<dbReference type="PDB" id="4BLB">
    <property type="method" value="X-ray"/>
    <property type="resolution" value="2.80 A"/>
    <property type="chains" value="A/B/C/D=32-278, A/B/C/D=361-483"/>
</dbReference>
<dbReference type="PDB" id="4BLD">
    <property type="method" value="X-ray"/>
    <property type="resolution" value="2.80 A"/>
    <property type="chains" value="A/B/C/D=32-278, A/B/C/D=361-483"/>
</dbReference>
<dbReference type="PDB" id="4KM8">
    <property type="method" value="X-ray"/>
    <property type="resolution" value="2.26 A"/>
    <property type="chains" value="A=1-484"/>
</dbReference>
<dbReference type="PDB" id="4KM9">
    <property type="method" value="X-ray"/>
    <property type="resolution" value="3.19 A"/>
    <property type="chains" value="A=1-484"/>
</dbReference>
<dbReference type="PDB" id="4KMD">
    <property type="method" value="X-ray"/>
    <property type="resolution" value="1.70 A"/>
    <property type="chains" value="A=1-484"/>
</dbReference>
<dbReference type="PDB" id="4KMH">
    <property type="method" value="X-ray"/>
    <property type="resolution" value="3.04 A"/>
    <property type="chains" value="A/B=1-484"/>
</dbReference>
<dbReference type="PDBsum" id="1M1L"/>
<dbReference type="PDBsum" id="4BL8"/>
<dbReference type="PDBsum" id="4BL9"/>
<dbReference type="PDBsum" id="4BLA"/>
<dbReference type="PDBsum" id="4BLB"/>
<dbReference type="PDBsum" id="4BLD"/>
<dbReference type="PDBsum" id="4KM8"/>
<dbReference type="PDBsum" id="4KM9"/>
<dbReference type="PDBsum" id="4KMD"/>
<dbReference type="PDBsum" id="4KMH"/>
<dbReference type="SASBDB" id="Q9UMX1"/>
<dbReference type="SMR" id="Q9UMX1"/>
<dbReference type="BioGRID" id="119676">
    <property type="interactions" value="103"/>
</dbReference>
<dbReference type="ComplexPortal" id="CPX-148">
    <property type="entry name" value="GLI2-SUFU complex"/>
</dbReference>
<dbReference type="ComplexPortal" id="CPX-150">
    <property type="entry name" value="GLI3-SUFU complex"/>
</dbReference>
<dbReference type="ComplexPortal" id="CPX-56">
    <property type="entry name" value="GLI1-SUFU complex"/>
</dbReference>
<dbReference type="CORUM" id="Q9UMX1"/>
<dbReference type="ELM" id="Q9UMX1"/>
<dbReference type="FunCoup" id="Q9UMX1">
    <property type="interactions" value="2096"/>
</dbReference>
<dbReference type="IntAct" id="Q9UMX1">
    <property type="interactions" value="77"/>
</dbReference>
<dbReference type="MINT" id="Q9UMX1"/>
<dbReference type="STRING" id="9606.ENSP00000358918"/>
<dbReference type="ChEMBL" id="CHEMBL5390"/>
<dbReference type="GlyGen" id="Q9UMX1">
    <property type="glycosylation" value="2 sites"/>
</dbReference>
<dbReference type="iPTMnet" id="Q9UMX1"/>
<dbReference type="PhosphoSitePlus" id="Q9UMX1"/>
<dbReference type="BioMuta" id="SUFU"/>
<dbReference type="DMDM" id="62511179"/>
<dbReference type="CPTAC" id="CPTAC-1329"/>
<dbReference type="jPOST" id="Q9UMX1"/>
<dbReference type="MassIVE" id="Q9UMX1"/>
<dbReference type="PaxDb" id="9606-ENSP00000358918"/>
<dbReference type="PeptideAtlas" id="Q9UMX1"/>
<dbReference type="ProteomicsDB" id="85217">
    <molecule id="Q9UMX1-1"/>
</dbReference>
<dbReference type="ProteomicsDB" id="85218">
    <molecule id="Q9UMX1-2"/>
</dbReference>
<dbReference type="ProteomicsDB" id="85219">
    <molecule id="Q9UMX1-3"/>
</dbReference>
<dbReference type="Pumba" id="Q9UMX1"/>
<dbReference type="Antibodypedia" id="1768">
    <property type="antibodies" value="294 antibodies from 38 providers"/>
</dbReference>
<dbReference type="DNASU" id="51684"/>
<dbReference type="Ensembl" id="ENST00000369899.6">
    <molecule id="Q9UMX1-2"/>
    <property type="protein sequence ID" value="ENSP00000358915.2"/>
    <property type="gene ID" value="ENSG00000107882.12"/>
</dbReference>
<dbReference type="Ensembl" id="ENST00000369902.8">
    <molecule id="Q9UMX1-1"/>
    <property type="protein sequence ID" value="ENSP00000358918.4"/>
    <property type="gene ID" value="ENSG00000107882.12"/>
</dbReference>
<dbReference type="Ensembl" id="ENST00000423559.2">
    <molecule id="Q9UMX1-3"/>
    <property type="protein sequence ID" value="ENSP00000411597.2"/>
    <property type="gene ID" value="ENSG00000107882.12"/>
</dbReference>
<dbReference type="GeneID" id="51684"/>
<dbReference type="KEGG" id="hsa:51684"/>
<dbReference type="MANE-Select" id="ENST00000369902.8">
    <property type="protein sequence ID" value="ENSP00000358918.4"/>
    <property type="RefSeq nucleotide sequence ID" value="NM_016169.4"/>
    <property type="RefSeq protein sequence ID" value="NP_057253.2"/>
</dbReference>
<dbReference type="UCSC" id="uc001kvw.3">
    <molecule id="Q9UMX1-1"/>
    <property type="organism name" value="human"/>
</dbReference>
<dbReference type="AGR" id="HGNC:16466"/>
<dbReference type="CTD" id="51684"/>
<dbReference type="DisGeNET" id="51684"/>
<dbReference type="GeneCards" id="SUFU"/>
<dbReference type="GeneReviews" id="SUFU"/>
<dbReference type="HGNC" id="HGNC:16466">
    <property type="gene designation" value="SUFU"/>
</dbReference>
<dbReference type="HPA" id="ENSG00000107882">
    <property type="expression patterns" value="Low tissue specificity"/>
</dbReference>
<dbReference type="MalaCards" id="SUFU"/>
<dbReference type="MIM" id="155255">
    <property type="type" value="phenotype"/>
</dbReference>
<dbReference type="MIM" id="607035">
    <property type="type" value="gene"/>
</dbReference>
<dbReference type="MIM" id="617757">
    <property type="type" value="phenotype"/>
</dbReference>
<dbReference type="MIM" id="620343">
    <property type="type" value="phenotype"/>
</dbReference>
<dbReference type="neXtProt" id="NX_Q9UMX1"/>
<dbReference type="OpenTargets" id="ENSG00000107882"/>
<dbReference type="Orphanet" id="251863">
    <property type="disease" value="Desmoplastic/nodular medulloblastoma"/>
</dbReference>
<dbReference type="Orphanet" id="263662">
    <property type="disease" value="Familial multiple meningioma"/>
</dbReference>
<dbReference type="Orphanet" id="377">
    <property type="disease" value="Gorlin syndrome"/>
</dbReference>
<dbReference type="Orphanet" id="475">
    <property type="disease" value="Joubert syndrome"/>
</dbReference>
<dbReference type="Orphanet" id="251858">
    <property type="disease" value="Medulloblastoma with extensive nodularity"/>
</dbReference>
<dbReference type="Orphanet" id="2495">
    <property type="disease" value="Meningioma"/>
</dbReference>
<dbReference type="Orphanet" id="280200">
    <property type="disease" value="Microform holoprosencephaly"/>
</dbReference>
<dbReference type="PharmGKB" id="PA38146"/>
<dbReference type="VEuPathDB" id="HostDB:ENSG00000107882"/>
<dbReference type="eggNOG" id="ENOG502QT57">
    <property type="taxonomic scope" value="Eukaryota"/>
</dbReference>
<dbReference type="GeneTree" id="ENSGT00390000009747"/>
<dbReference type="HOGENOM" id="CLU_033906_0_0_1"/>
<dbReference type="InParanoid" id="Q9UMX1"/>
<dbReference type="OMA" id="CQIVGVT"/>
<dbReference type="OrthoDB" id="10038834at2759"/>
<dbReference type="PAN-GO" id="Q9UMX1">
    <property type="GO annotations" value="4 GO annotations based on evolutionary models"/>
</dbReference>
<dbReference type="PhylomeDB" id="Q9UMX1"/>
<dbReference type="TreeFam" id="TF324548"/>
<dbReference type="PathwayCommons" id="Q9UMX1"/>
<dbReference type="Reactome" id="R-HSA-5610780">
    <property type="pathway name" value="Degradation of GLI1 by the proteasome"/>
</dbReference>
<dbReference type="Reactome" id="R-HSA-5610783">
    <property type="pathway name" value="Degradation of GLI2 by the proteasome"/>
</dbReference>
<dbReference type="Reactome" id="R-HSA-5610785">
    <property type="pathway name" value="GLI3 is processed to GLI3R by the proteasome"/>
</dbReference>
<dbReference type="Reactome" id="R-HSA-5610787">
    <property type="pathway name" value="Hedgehog 'off' state"/>
</dbReference>
<dbReference type="Reactome" id="R-HSA-5632684">
    <property type="pathway name" value="Hedgehog 'on' state"/>
</dbReference>
<dbReference type="SignaLink" id="Q9UMX1"/>
<dbReference type="SIGNOR" id="Q9UMX1"/>
<dbReference type="BioGRID-ORCS" id="51684">
    <property type="hits" value="22 hits in 1182 CRISPR screens"/>
</dbReference>
<dbReference type="ChiTaRS" id="SUFU">
    <property type="organism name" value="human"/>
</dbReference>
<dbReference type="EvolutionaryTrace" id="Q9UMX1"/>
<dbReference type="GeneWiki" id="SUFU"/>
<dbReference type="GenomeRNAi" id="51684"/>
<dbReference type="Pharos" id="Q9UMX1">
    <property type="development level" value="Tbio"/>
</dbReference>
<dbReference type="PRO" id="PR:Q9UMX1"/>
<dbReference type="Proteomes" id="UP000005640">
    <property type="component" value="Chromosome 10"/>
</dbReference>
<dbReference type="RNAct" id="Q9UMX1">
    <property type="molecule type" value="protein"/>
</dbReference>
<dbReference type="Bgee" id="ENSG00000107882">
    <property type="expression patterns" value="Expressed in upper arm skin and 181 other cell types or tissues"/>
</dbReference>
<dbReference type="GO" id="GO:0097546">
    <property type="term" value="C:ciliary base"/>
    <property type="evidence" value="ECO:0000304"/>
    <property type="project" value="Reactome"/>
</dbReference>
<dbReference type="GO" id="GO:0097542">
    <property type="term" value="C:ciliary tip"/>
    <property type="evidence" value="ECO:0000304"/>
    <property type="project" value="Reactome"/>
</dbReference>
<dbReference type="GO" id="GO:0005929">
    <property type="term" value="C:cilium"/>
    <property type="evidence" value="ECO:0000314"/>
    <property type="project" value="HPA"/>
</dbReference>
<dbReference type="GO" id="GO:0005737">
    <property type="term" value="C:cytoplasm"/>
    <property type="evidence" value="ECO:0000314"/>
    <property type="project" value="UniProtKB"/>
</dbReference>
<dbReference type="GO" id="GO:0005829">
    <property type="term" value="C:cytosol"/>
    <property type="evidence" value="ECO:0000304"/>
    <property type="project" value="Reactome"/>
</dbReference>
<dbReference type="GO" id="GO:1990788">
    <property type="term" value="C:GLI-SUFU complex"/>
    <property type="evidence" value="ECO:0000353"/>
    <property type="project" value="ComplexPortal"/>
</dbReference>
<dbReference type="GO" id="GO:0005654">
    <property type="term" value="C:nucleoplasm"/>
    <property type="evidence" value="ECO:0000314"/>
    <property type="project" value="HPA"/>
</dbReference>
<dbReference type="GO" id="GO:0005634">
    <property type="term" value="C:nucleus"/>
    <property type="evidence" value="ECO:0000314"/>
    <property type="project" value="UniProtKB"/>
</dbReference>
<dbReference type="GO" id="GO:0008013">
    <property type="term" value="F:beta-catenin binding"/>
    <property type="evidence" value="ECO:0007669"/>
    <property type="project" value="Ensembl"/>
</dbReference>
<dbReference type="GO" id="GO:0019901">
    <property type="term" value="F:protein kinase binding"/>
    <property type="evidence" value="ECO:0000353"/>
    <property type="project" value="UniProtKB"/>
</dbReference>
<dbReference type="GO" id="GO:0003714">
    <property type="term" value="F:transcription corepressor activity"/>
    <property type="evidence" value="ECO:0000304"/>
    <property type="project" value="UniProtKB"/>
</dbReference>
<dbReference type="GO" id="GO:0035904">
    <property type="term" value="P:aorta development"/>
    <property type="evidence" value="ECO:0007669"/>
    <property type="project" value="Ensembl"/>
</dbReference>
<dbReference type="GO" id="GO:0060976">
    <property type="term" value="P:coronary vasculature development"/>
    <property type="evidence" value="ECO:0007669"/>
    <property type="project" value="Ensembl"/>
</dbReference>
<dbReference type="GO" id="GO:0001947">
    <property type="term" value="P:heart looping"/>
    <property type="evidence" value="ECO:0007669"/>
    <property type="project" value="Ensembl"/>
</dbReference>
<dbReference type="GO" id="GO:0045668">
    <property type="term" value="P:negative regulation of osteoblast differentiation"/>
    <property type="evidence" value="ECO:0000304"/>
    <property type="project" value="BHF-UCL"/>
</dbReference>
<dbReference type="GO" id="GO:0042308">
    <property type="term" value="P:negative regulation of protein import into nucleus"/>
    <property type="evidence" value="ECO:0000304"/>
    <property type="project" value="BHF-UCL"/>
</dbReference>
<dbReference type="GO" id="GO:0045879">
    <property type="term" value="P:negative regulation of smoothened signaling pathway"/>
    <property type="evidence" value="ECO:0000315"/>
    <property type="project" value="UniProtKB"/>
</dbReference>
<dbReference type="GO" id="GO:0000122">
    <property type="term" value="P:negative regulation of transcription by RNA polymerase II"/>
    <property type="evidence" value="ECO:0000314"/>
    <property type="project" value="MGI"/>
</dbReference>
<dbReference type="GO" id="GO:2000059">
    <property type="term" value="P:negative regulation of ubiquitin-dependent protein catabolic process"/>
    <property type="evidence" value="ECO:0007669"/>
    <property type="project" value="Ensembl"/>
</dbReference>
<dbReference type="GO" id="GO:0001843">
    <property type="term" value="P:neural tube closure"/>
    <property type="evidence" value="ECO:0007669"/>
    <property type="project" value="Ensembl"/>
</dbReference>
<dbReference type="GO" id="GO:2001040">
    <property type="term" value="P:positive regulation of cellular response to drug"/>
    <property type="evidence" value="ECO:0007669"/>
    <property type="project" value="Ensembl"/>
</dbReference>
<dbReference type="GO" id="GO:0006355">
    <property type="term" value="P:regulation of DNA-templated transcription"/>
    <property type="evidence" value="ECO:0000314"/>
    <property type="project" value="ComplexPortal"/>
</dbReference>
<dbReference type="GO" id="GO:0007165">
    <property type="term" value="P:signal transduction"/>
    <property type="evidence" value="ECO:0000304"/>
    <property type="project" value="ProtInc"/>
</dbReference>
<dbReference type="GO" id="GO:0043588">
    <property type="term" value="P:skin development"/>
    <property type="evidence" value="ECO:0007669"/>
    <property type="project" value="Ensembl"/>
</dbReference>
<dbReference type="GO" id="GO:0021776">
    <property type="term" value="P:smoothened signaling pathway involved in spinal cord motor neuron cell fate specification"/>
    <property type="evidence" value="ECO:0007669"/>
    <property type="project" value="Ensembl"/>
</dbReference>
<dbReference type="GO" id="GO:0021775">
    <property type="term" value="P:smoothened signaling pathway involved in ventral spinal cord interneuron specification"/>
    <property type="evidence" value="ECO:0007669"/>
    <property type="project" value="Ensembl"/>
</dbReference>
<dbReference type="GO" id="GO:0007286">
    <property type="term" value="P:spermatid development"/>
    <property type="evidence" value="ECO:0007669"/>
    <property type="project" value="Ensembl"/>
</dbReference>
<dbReference type="GO" id="GO:0003281">
    <property type="term" value="P:ventricular septum development"/>
    <property type="evidence" value="ECO:0007669"/>
    <property type="project" value="Ensembl"/>
</dbReference>
<dbReference type="DisProt" id="DP01312"/>
<dbReference type="FunFam" id="3.30.1360.230:FF:000001">
    <property type="entry name" value="Suppressor of fused homolog"/>
    <property type="match status" value="1"/>
</dbReference>
<dbReference type="Gene3D" id="3.30.1360.230">
    <property type="entry name" value="Sufu, C-terminal domain"/>
    <property type="match status" value="1"/>
</dbReference>
<dbReference type="InterPro" id="IPR020941">
    <property type="entry name" value="SUFU-like_domain"/>
</dbReference>
<dbReference type="InterPro" id="IPR024314">
    <property type="entry name" value="SUFU_C"/>
</dbReference>
<dbReference type="InterPro" id="IPR038489">
    <property type="entry name" value="SUFU_C_sf"/>
</dbReference>
<dbReference type="InterPro" id="IPR037181">
    <property type="entry name" value="SUFU_N"/>
</dbReference>
<dbReference type="InterPro" id="IPR007768">
    <property type="entry name" value="Suppressor_of_fused"/>
</dbReference>
<dbReference type="InterPro" id="IPR016591">
    <property type="entry name" value="Suppressor_of_fused_euk"/>
</dbReference>
<dbReference type="PANTHER" id="PTHR10928">
    <property type="entry name" value="SUPPRESSOR OF FUSED"/>
    <property type="match status" value="1"/>
</dbReference>
<dbReference type="PANTHER" id="PTHR10928:SF2">
    <property type="entry name" value="SUPPRESSOR OF FUSED HOMOLOG"/>
    <property type="match status" value="1"/>
</dbReference>
<dbReference type="Pfam" id="PF05076">
    <property type="entry name" value="SUFU"/>
    <property type="match status" value="1"/>
</dbReference>
<dbReference type="Pfam" id="PF12470">
    <property type="entry name" value="SUFU_C"/>
    <property type="match status" value="1"/>
</dbReference>
<dbReference type="PIRSF" id="PIRSF011844">
    <property type="entry name" value="Suppressor_of_fused_protein"/>
    <property type="match status" value="1"/>
</dbReference>
<dbReference type="SUPFAM" id="SSF103359">
    <property type="entry name" value="Suppressor of Fused, N-terminal domain"/>
    <property type="match status" value="1"/>
</dbReference>
<organism>
    <name type="scientific">Homo sapiens</name>
    <name type="common">Human</name>
    <dbReference type="NCBI Taxonomy" id="9606"/>
    <lineage>
        <taxon>Eukaryota</taxon>
        <taxon>Metazoa</taxon>
        <taxon>Chordata</taxon>
        <taxon>Craniata</taxon>
        <taxon>Vertebrata</taxon>
        <taxon>Euteleostomi</taxon>
        <taxon>Mammalia</taxon>
        <taxon>Eutheria</taxon>
        <taxon>Euarchontoglires</taxon>
        <taxon>Primates</taxon>
        <taxon>Haplorrhini</taxon>
        <taxon>Catarrhini</taxon>
        <taxon>Hominidae</taxon>
        <taxon>Homo</taxon>
    </lineage>
</organism>
<sequence length="484" mass="53947">MAELRPSGAPGPTAPPAPGPTAPPAFASLFPPGLHAIYGECRRLYPDQPNPLQVTAIVKYWLGGPDPLDYVSMYRNVGSPSANIPEHWHYISFGLSDLYGDNRVHEFTGTDGPSGFGFELTFRLKRETGESAPPTWPAELMQGLARYVFQSENTFCSGDHVSWHSPLDNSESRIQHMLLTEDPQMQPVQTPFGVVTFLQIVGVCTEELHSAQQWNGQGILELLRTVPIAGGPWLITDMRRGETIFEIDPHLQERVDKGIETDGSNLSGVSAKCAWDDLSRPPEDDEDSRSICIGTQPRRLSGKDTEQIRETLRRGLEINSKPVLPPINPQRQNGLAHDRAPSRKDSLESDSSTAIIPHELIRTRQLESVHLKFNQESGALIPLCLRGRLLHGRHFTYKSITGDMAITFVSTGVEGAFATEEHPYAAHGPWLQILLTEEFVEKMLEDLEDLTSPEEFKLPKEYSWPEKKLKVSILPDVVFDSPLH</sequence>
<feature type="chain" id="PRO_0000072302" description="Suppressor of fused homolog">
    <location>
        <begin position="1"/>
        <end position="484"/>
    </location>
</feature>
<feature type="region of interest" description="Disordered" evidence="2">
    <location>
        <begin position="1"/>
        <end position="24"/>
    </location>
</feature>
<feature type="region of interest" description="Disordered" evidence="13">
    <location>
        <begin position="279"/>
        <end position="360"/>
    </location>
</feature>
<feature type="compositionally biased region" description="Pro residues" evidence="2">
    <location>
        <begin position="12"/>
        <end position="23"/>
    </location>
</feature>
<feature type="compositionally biased region" description="Basic and acidic residues" evidence="2">
    <location>
        <begin position="336"/>
        <end position="347"/>
    </location>
</feature>
<feature type="modified residue" description="Phosphoserine" evidence="24">
    <location>
        <position position="301"/>
    </location>
</feature>
<feature type="modified residue" description="N6-acetyllysine" evidence="23">
    <location>
        <position position="303"/>
    </location>
</feature>
<feature type="modified residue" description="Phosphoserine" evidence="14 24">
    <location>
        <position position="342"/>
    </location>
</feature>
<feature type="modified residue" description="Phosphoserine" evidence="14 24">
    <location>
        <position position="346"/>
    </location>
</feature>
<feature type="modified residue" description="Phosphoserine" evidence="14">
    <location>
        <position position="352"/>
    </location>
</feature>
<feature type="modified residue" description="Phosphothreonine" evidence="14">
    <location>
        <position position="353"/>
    </location>
</feature>
<feature type="modified residue" description="Phosphoserine" evidence="22">
    <location>
        <position position="481"/>
    </location>
</feature>
<feature type="cross-link" description="Glycyl lysine isopeptide (Lys-Gly) (interchain with G-Cter in ubiquitin)" evidence="14">
    <location>
        <position position="257"/>
    </location>
</feature>
<feature type="cross-link" description="Glycyl lysine isopeptide (Lys-Gly) (interchain with G-Cter in SUMO2)" evidence="25">
    <location>
        <position position="321"/>
    </location>
</feature>
<feature type="splice variant" id="VSP_013280" description="In isoform 3." evidence="17">
    <original>ILLTEEFVEKMLEDLEDLTSPEEFKLPKEYSWPEKKLKVSILPDVVFDSPLH</original>
    <variation>VRRPFFFSLLPFIDFLAHPSSSPLAALDGTPSWGAGHECLMDSGPGACV</variation>
    <location>
        <begin position="433"/>
        <end position="484"/>
    </location>
</feature>
<feature type="splice variant" id="VSP_013278" description="In isoform 2." evidence="17 19">
    <original>I</original>
    <variation>L</variation>
    <location>
        <position position="433"/>
    </location>
</feature>
<feature type="splice variant" id="VSP_013279" description="In isoform 2." evidence="17 19">
    <location>
        <begin position="434"/>
        <end position="484"/>
    </location>
</feature>
<feature type="sequence variant" id="VAR_021566" description="In dbSNP:rs28942088." evidence="6">
    <original>P</original>
    <variation>L</variation>
    <location>
        <position position="15"/>
    </location>
</feature>
<feature type="sequence variant" id="VAR_080418" evidence="15">
    <original>G</original>
    <variation>V</variation>
    <location>
        <position position="19"/>
    </location>
</feature>
<feature type="sequence variant" id="VAR_080419" description="In dbSNP:rs745793517." evidence="15">
    <original>I</original>
    <variation>V</variation>
    <location>
        <position position="37"/>
    </location>
</feature>
<feature type="sequence variant" id="VAR_080420" description="In dbSNP:rs2062368359." evidence="15">
    <original>V</original>
    <variation>M</variation>
    <location>
        <position position="77"/>
    </location>
</feature>
<feature type="sequence variant" id="VAR_080421" description="In JBTS32; decreased stability; no effect on nuclear and cytoplasmic localization; decreased interaction with GLI3; no effect on interaction with GLI1; decreased repression of the hedgehog/smoothened signaling pathway; dbSNP:rs1554852272." evidence="15">
    <original>H</original>
    <variation>R</variation>
    <location>
        <position position="176"/>
    </location>
</feature>
<feature type="sequence variant" id="VAR_080422" description="In dbSNP:rs149016373." evidence="15">
    <original>R</original>
    <variation>Q</variation>
    <location>
        <position position="289"/>
    </location>
</feature>
<feature type="sequence variant" id="VAR_080423" description="In dbSNP:rs574002050." evidence="15">
    <original>I</original>
    <variation>V</variation>
    <location>
        <position position="293"/>
    </location>
</feature>
<feature type="sequence variant" id="VAR_080424" evidence="15">
    <location>
        <begin position="299"/>
        <end position="484"/>
    </location>
</feature>
<feature type="sequence variant" id="VAR_021567" description="In dbSNP:rs34135067." evidence="6">
    <original>A</original>
    <variation>S</variation>
    <location>
        <position position="340"/>
    </location>
</feature>
<feature type="sequence variant" id="VAR_080425" description="In dbSNP:rs1401882800." evidence="15">
    <original>P</original>
    <variation>L</variation>
    <location>
        <position position="382"/>
    </location>
</feature>
<feature type="sequence variant" id="VAR_080426" description="In JBTS32; decreased stability; forms cytoplasmic aggregates; decreased interaction with GLI3; no effect on interaction with GLI1; decreased repression of the hedgehog/smoothened signaling pathway; dbSNP:rs1554854758." evidence="15">
    <original>I</original>
    <variation>T</variation>
    <location>
        <position position="406"/>
    </location>
</feature>
<feature type="sequence variant" id="VAR_080427" description="In dbSNP:rs772598739." evidence="15">
    <original>K</original>
    <variation>R</variation>
    <location>
        <position position="442"/>
    </location>
</feature>
<feature type="sequence variant" id="VAR_080428" evidence="15">
    <original>S</original>
    <variation>N</variation>
    <location>
        <position position="481"/>
    </location>
</feature>
<feature type="mutagenesis site" description="No effect on down-regulation of GLI1 activity." evidence="8">
    <original>E</original>
    <variation>A</variation>
    <location>
        <position position="106"/>
    </location>
</feature>
<feature type="mutagenesis site" description="No effect on down-regulation of GLI1 activity." evidence="8">
    <original>D</original>
    <variation>A</variation>
    <location>
        <position position="111"/>
    </location>
</feature>
<feature type="mutagenesis site" description="No effect on down-regulation of GLI1 activity." evidence="8">
    <original>T</original>
    <variation>A</variation>
    <variation>D</variation>
    <location>
        <position position="128"/>
    </location>
</feature>
<feature type="mutagenesis site" description="Impairs interaction with GLI1 and GLI2. Abolishes interaction with GLI1 and GLI2; when associated with R-159 and R-380." evidence="12">
    <original>Y</original>
    <variation>R</variation>
    <location>
        <position position="147"/>
    </location>
</feature>
<feature type="mutagenesis site" description="No effect on down-regulation of GLI1 activity." evidence="8">
    <original>E</original>
    <variation>A</variation>
    <location>
        <position position="152"/>
    </location>
</feature>
<feature type="mutagenesis site" description="Abolishes down-regulation of GLI1 activity. Has only slight effect on GLI1 binding." evidence="8">
    <original>D</original>
    <variation>A</variation>
    <location>
        <position position="159"/>
    </location>
</feature>
<feature type="mutagenesis site" description="Impairs interaction with GLI1 and GLI2. Abolishes interaction with GLI1 and GLI2; when associated with R-147 and R-380." evidence="12">
    <original>D</original>
    <variation>R</variation>
    <location>
        <position position="159"/>
    </location>
</feature>
<feature type="mutagenesis site" description="No effect on down-regulation of GLI1 activity." evidence="8">
    <original>E</original>
    <variation>A</variation>
    <location>
        <position position="181"/>
    </location>
</feature>
<feature type="mutagenesis site" description="No effect on down-regulation of GLI1 activity." evidence="8">
    <original>E</original>
    <variation>A</variation>
    <location>
        <position position="221"/>
    </location>
</feature>
<feature type="mutagenesis site" description="Abolishes ubiquitination by the SCF(FBXL17) complex." evidence="14">
    <original>K</original>
    <variation>R</variation>
    <location>
        <position position="257"/>
    </location>
</feature>
<feature type="mutagenesis site" description="No effect on down-regulation of GLI1 activity." evidence="8">
    <original>D</original>
    <variation>A</variation>
    <location>
        <position position="262"/>
    </location>
</feature>
<feature type="mutagenesis site" description="Increased interaction with FBXL17 and ubiquitination by the SCF(FBXL17) complex." evidence="14">
    <original>SRKDS</original>
    <variation>ARKDA</variation>
    <location>
        <begin position="342"/>
        <end position="346"/>
    </location>
</feature>
<feature type="mutagenesis site" description="Phosphomimetic mutant; decreased interaction with FBXL17 and ubiquitination by the SCF(FBXL17) complex." evidence="14">
    <original>SRKDS</original>
    <variation>DRKDD</variation>
    <location>
        <begin position="342"/>
        <end position="346"/>
    </location>
</feature>
<feature type="mutagenesis site" description="Impairs interaction with GLI1 and GLI2. Abolishes interaction with GLI1 and GLI2; when associated with R-147 and R-159." evidence="12">
    <original>L</original>
    <variation>R</variation>
    <location>
        <position position="380"/>
    </location>
</feature>
<feature type="sequence conflict" description="In Ref. 2; AAD50501." evidence="20" ref="2">
    <original>A</original>
    <variation>P</variation>
    <location>
        <position position="336"/>
    </location>
</feature>
<feature type="helix" evidence="28">
    <location>
        <begin position="27"/>
        <end position="29"/>
    </location>
</feature>
<feature type="helix" evidence="29">
    <location>
        <begin position="32"/>
        <end position="44"/>
    </location>
</feature>
<feature type="strand" evidence="29">
    <location>
        <begin position="52"/>
        <end position="55"/>
    </location>
</feature>
<feature type="helix" evidence="29">
    <location>
        <begin position="60"/>
        <end position="62"/>
    </location>
</feature>
<feature type="strand" evidence="29">
    <location>
        <begin position="69"/>
        <end position="76"/>
    </location>
</feature>
<feature type="helix" evidence="29">
    <location>
        <begin position="80"/>
        <end position="82"/>
    </location>
</feature>
<feature type="strand" evidence="29">
    <location>
        <begin position="87"/>
        <end position="96"/>
    </location>
</feature>
<feature type="strand" evidence="29">
    <location>
        <begin position="101"/>
        <end position="105"/>
    </location>
</feature>
<feature type="strand" evidence="29">
    <location>
        <begin position="110"/>
        <end position="125"/>
    </location>
</feature>
<feature type="helix" evidence="29">
    <location>
        <begin position="136"/>
        <end position="151"/>
    </location>
</feature>
<feature type="strand" evidence="27">
    <location>
        <begin position="160"/>
        <end position="162"/>
    </location>
</feature>
<feature type="strand" evidence="29">
    <location>
        <begin position="169"/>
        <end position="171"/>
    </location>
</feature>
<feature type="strand" evidence="29">
    <location>
        <begin position="176"/>
        <end position="181"/>
    </location>
</feature>
<feature type="strand" evidence="29">
    <location>
        <begin position="188"/>
        <end position="190"/>
    </location>
</feature>
<feature type="strand" evidence="29">
    <location>
        <begin position="193"/>
        <end position="203"/>
    </location>
</feature>
<feature type="helix" evidence="29">
    <location>
        <begin position="205"/>
        <end position="213"/>
    </location>
</feature>
<feature type="helix" evidence="29">
    <location>
        <begin position="216"/>
        <end position="224"/>
    </location>
</feature>
<feature type="helix" evidence="29">
    <location>
        <begin position="227"/>
        <end position="229"/>
    </location>
</feature>
<feature type="turn" evidence="29">
    <location>
        <begin position="230"/>
        <end position="234"/>
    </location>
</feature>
<feature type="helix" evidence="29">
    <location>
        <begin position="244"/>
        <end position="247"/>
    </location>
</feature>
<feature type="helix" evidence="29">
    <location>
        <begin position="250"/>
        <end position="262"/>
    </location>
</feature>
<feature type="strand" evidence="29">
    <location>
        <begin position="266"/>
        <end position="276"/>
    </location>
</feature>
<feature type="strand" evidence="26">
    <location>
        <begin position="363"/>
        <end position="367"/>
    </location>
</feature>
<feature type="strand" evidence="29">
    <location>
        <begin position="369"/>
        <end position="373"/>
    </location>
</feature>
<feature type="helix" evidence="29">
    <location>
        <begin position="375"/>
        <end position="378"/>
    </location>
</feature>
<feature type="helix" evidence="29">
    <location>
        <begin position="381"/>
        <end position="387"/>
    </location>
</feature>
<feature type="helix" evidence="29">
    <location>
        <begin position="389"/>
        <end position="391"/>
    </location>
</feature>
<feature type="strand" evidence="29">
    <location>
        <begin position="395"/>
        <end position="403"/>
    </location>
</feature>
<feature type="strand" evidence="29">
    <location>
        <begin position="405"/>
        <end position="409"/>
    </location>
</feature>
<feature type="strand" evidence="29">
    <location>
        <begin position="420"/>
        <end position="422"/>
    </location>
</feature>
<feature type="strand" evidence="29">
    <location>
        <begin position="424"/>
        <end position="427"/>
    </location>
</feature>
<feature type="strand" evidence="29">
    <location>
        <begin position="430"/>
        <end position="434"/>
    </location>
</feature>
<feature type="helix" evidence="29">
    <location>
        <begin position="437"/>
        <end position="446"/>
    </location>
</feature>
<feature type="turn" evidence="29">
    <location>
        <begin position="447"/>
        <end position="449"/>
    </location>
</feature>
<feature type="strand" evidence="29">
    <location>
        <begin position="460"/>
        <end position="464"/>
    </location>
</feature>
<feature type="helix" evidence="29">
    <location>
        <begin position="465"/>
        <end position="467"/>
    </location>
</feature>
<feature type="strand" evidence="29">
    <location>
        <begin position="469"/>
        <end position="473"/>
    </location>
</feature>
<feature type="helix" evidence="29">
    <location>
        <begin position="476"/>
        <end position="479"/>
    </location>
</feature>